<gene>
    <name type="primary">MGR1</name>
    <name type="ordered locus">DEHA2E20680g</name>
</gene>
<protein>
    <recommendedName>
        <fullName>Mitochondrial inner membrane i-AAA protease complex subunit MGR1</fullName>
    </recommendedName>
</protein>
<name>MGR1_DEBHA</name>
<organism>
    <name type="scientific">Debaryomyces hansenii (strain ATCC 36239 / CBS 767 / BCRC 21394 / JCM 1990 / NBRC 0083 / IGC 2968)</name>
    <name type="common">Yeast</name>
    <name type="synonym">Torulaspora hansenii</name>
    <dbReference type="NCBI Taxonomy" id="284592"/>
    <lineage>
        <taxon>Eukaryota</taxon>
        <taxon>Fungi</taxon>
        <taxon>Dikarya</taxon>
        <taxon>Ascomycota</taxon>
        <taxon>Saccharomycotina</taxon>
        <taxon>Pichiomycetes</taxon>
        <taxon>Debaryomycetaceae</taxon>
        <taxon>Debaryomyces</taxon>
    </lineage>
</organism>
<reference key="1">
    <citation type="journal article" date="2004" name="Nature">
        <title>Genome evolution in yeasts.</title>
        <authorList>
            <person name="Dujon B."/>
            <person name="Sherman D."/>
            <person name="Fischer G."/>
            <person name="Durrens P."/>
            <person name="Casaregola S."/>
            <person name="Lafontaine I."/>
            <person name="de Montigny J."/>
            <person name="Marck C."/>
            <person name="Neuveglise C."/>
            <person name="Talla E."/>
            <person name="Goffard N."/>
            <person name="Frangeul L."/>
            <person name="Aigle M."/>
            <person name="Anthouard V."/>
            <person name="Babour A."/>
            <person name="Barbe V."/>
            <person name="Barnay S."/>
            <person name="Blanchin S."/>
            <person name="Beckerich J.-M."/>
            <person name="Beyne E."/>
            <person name="Bleykasten C."/>
            <person name="Boisrame A."/>
            <person name="Boyer J."/>
            <person name="Cattolico L."/>
            <person name="Confanioleri F."/>
            <person name="de Daruvar A."/>
            <person name="Despons L."/>
            <person name="Fabre E."/>
            <person name="Fairhead C."/>
            <person name="Ferry-Dumazet H."/>
            <person name="Groppi A."/>
            <person name="Hantraye F."/>
            <person name="Hennequin C."/>
            <person name="Jauniaux N."/>
            <person name="Joyet P."/>
            <person name="Kachouri R."/>
            <person name="Kerrest A."/>
            <person name="Koszul R."/>
            <person name="Lemaire M."/>
            <person name="Lesur I."/>
            <person name="Ma L."/>
            <person name="Muller H."/>
            <person name="Nicaud J.-M."/>
            <person name="Nikolski M."/>
            <person name="Oztas S."/>
            <person name="Ozier-Kalogeropoulos O."/>
            <person name="Pellenz S."/>
            <person name="Potier S."/>
            <person name="Richard G.-F."/>
            <person name="Straub M.-L."/>
            <person name="Suleau A."/>
            <person name="Swennen D."/>
            <person name="Tekaia F."/>
            <person name="Wesolowski-Louvel M."/>
            <person name="Westhof E."/>
            <person name="Wirth B."/>
            <person name="Zeniou-Meyer M."/>
            <person name="Zivanovic Y."/>
            <person name="Bolotin-Fukuhara M."/>
            <person name="Thierry A."/>
            <person name="Bouchier C."/>
            <person name="Caudron B."/>
            <person name="Scarpelli C."/>
            <person name="Gaillardin C."/>
            <person name="Weissenbach J."/>
            <person name="Wincker P."/>
            <person name="Souciet J.-L."/>
        </authorList>
    </citation>
    <scope>NUCLEOTIDE SEQUENCE [LARGE SCALE GENOMIC DNA]</scope>
    <source>
        <strain>ATCC 36239 / CBS 767 / BCRC 21394 / JCM 1990 / NBRC 0083 / IGC 2968</strain>
    </source>
</reference>
<keyword id="KW-0472">Membrane</keyword>
<keyword id="KW-0496">Mitochondrion</keyword>
<keyword id="KW-0999">Mitochondrion inner membrane</keyword>
<keyword id="KW-1185">Reference proteome</keyword>
<keyword id="KW-0812">Transmembrane</keyword>
<keyword id="KW-1133">Transmembrane helix</keyword>
<accession>Q6BNL9</accession>
<dbReference type="EMBL" id="CR382137">
    <property type="protein sequence ID" value="CAG88474.2"/>
    <property type="molecule type" value="Genomic_DNA"/>
</dbReference>
<dbReference type="RefSeq" id="XP_460201.2">
    <property type="nucleotide sequence ID" value="XM_460201.1"/>
</dbReference>
<dbReference type="FunCoup" id="Q6BNL9">
    <property type="interactions" value="42"/>
</dbReference>
<dbReference type="STRING" id="284592.Q6BNL9"/>
<dbReference type="GeneID" id="2902711"/>
<dbReference type="KEGG" id="dha:DEHA2E20680g"/>
<dbReference type="VEuPathDB" id="FungiDB:DEHA2E20680g"/>
<dbReference type="eggNOG" id="ENOG502QR67">
    <property type="taxonomic scope" value="Eukaryota"/>
</dbReference>
<dbReference type="HOGENOM" id="CLU_871878_0_0_1"/>
<dbReference type="InParanoid" id="Q6BNL9"/>
<dbReference type="OMA" id="EFEMVWL"/>
<dbReference type="OrthoDB" id="4087899at2759"/>
<dbReference type="Proteomes" id="UP000000599">
    <property type="component" value="Chromosome E"/>
</dbReference>
<dbReference type="GO" id="GO:0005743">
    <property type="term" value="C:mitochondrial inner membrane"/>
    <property type="evidence" value="ECO:0007669"/>
    <property type="project" value="UniProtKB-SubCell"/>
</dbReference>
<dbReference type="InterPro" id="IPR013911">
    <property type="entry name" value="i-AAA_Mgr1"/>
</dbReference>
<dbReference type="Pfam" id="PF08602">
    <property type="entry name" value="Mgr1"/>
    <property type="match status" value="1"/>
</dbReference>
<evidence type="ECO:0000250" key="1"/>
<evidence type="ECO:0000255" key="2"/>
<evidence type="ECO:0000256" key="3">
    <source>
        <dbReference type="SAM" id="MobiDB-lite"/>
    </source>
</evidence>
<evidence type="ECO:0000305" key="4"/>
<comment type="function">
    <text evidence="1">Component of the mitochondrial inner membrane i-AAA protease complex required for mitochondrial inner membrane protein turnover.</text>
</comment>
<comment type="subunit">
    <text evidence="1">Component of the mitochondrial inner membrane i-AAA protease complex.</text>
</comment>
<comment type="subcellular location">
    <subcellularLocation>
        <location evidence="1">Mitochondrion inner membrane</location>
        <topology evidence="1">Multi-pass membrane protein</topology>
    </subcellularLocation>
</comment>
<comment type="similarity">
    <text evidence="4">Belongs to the MGR1 family.</text>
</comment>
<sequence>MGVYIPPGSGGNDNGKSGGSGDNTLTIPNPASFIPQNPSLGLRLWGPLVPASDNLPALYFLTSLQIGIGLLSFNKVRYLRRSNLARFGIENTWQRRSTKWLCAIGGSYLVYQSGIEMSRLAMPYDPWYDEAKFYRKLAIKNGDNPSWWFGATGYYKPMNYKEWYTKIDKWFNNQINIIDAEHENVDTASSQVSTRGKHPQSPLLSSLSRKGKYSEIYQSLHESNIKRYKKLLDQSLKDVNELNKAERLDLIMEGKSSIKYNEEYLKPHIQLGNHRIDTDEEFEMVWLNFEPWDELKMETDYDIRLVPRWRWSEDEDVEASSTESVPTEPTTNLVNEVDESHI</sequence>
<proteinExistence type="inferred from homology"/>
<feature type="chain" id="PRO_0000324412" description="Mitochondrial inner membrane i-AAA protease complex subunit MGR1">
    <location>
        <begin position="1"/>
        <end position="342"/>
    </location>
</feature>
<feature type="topological domain" description="Mitochondrial intermembrane" evidence="1">
    <location>
        <begin position="1"/>
        <end position="56"/>
    </location>
</feature>
<feature type="transmembrane region" description="Helical" evidence="2">
    <location>
        <begin position="57"/>
        <end position="73"/>
    </location>
</feature>
<feature type="topological domain" description="Mitochondrial matrix" evidence="1">
    <location>
        <begin position="74"/>
        <end position="99"/>
    </location>
</feature>
<feature type="transmembrane region" description="Helical" evidence="2">
    <location>
        <begin position="100"/>
        <end position="117"/>
    </location>
</feature>
<feature type="topological domain" description="Mitochondrial intermembrane" evidence="1">
    <location>
        <begin position="118"/>
        <end position="342"/>
    </location>
</feature>
<feature type="region of interest" description="Disordered" evidence="3">
    <location>
        <begin position="1"/>
        <end position="28"/>
    </location>
</feature>
<feature type="region of interest" description="Disordered" evidence="3">
    <location>
        <begin position="317"/>
        <end position="342"/>
    </location>
</feature>
<feature type="compositionally biased region" description="Gly residues" evidence="3">
    <location>
        <begin position="8"/>
        <end position="21"/>
    </location>
</feature>
<feature type="compositionally biased region" description="Low complexity" evidence="3">
    <location>
        <begin position="319"/>
        <end position="331"/>
    </location>
</feature>